<reference key="1">
    <citation type="journal article" date="2007" name="Genes Dev.">
        <title>New insights into Acinetobacter baumannii pathogenesis revealed by high-density pyrosequencing and transposon mutagenesis.</title>
        <authorList>
            <person name="Smith M.G."/>
            <person name="Gianoulis T.A."/>
            <person name="Pukatzki S."/>
            <person name="Mekalanos J.J."/>
            <person name="Ornston L.N."/>
            <person name="Gerstein M."/>
            <person name="Snyder M."/>
        </authorList>
    </citation>
    <scope>NUCLEOTIDE SEQUENCE [LARGE SCALE GENOMIC DNA]</scope>
    <source>
        <strain>ATCC 17978 / DSM 105126 / CIP 53.77 / LMG 1025 / NCDC KC755 / 5377</strain>
    </source>
</reference>
<gene>
    <name evidence="1" type="primary">prfA</name>
    <name type="ordered locus">A1S_2154</name>
</gene>
<dbReference type="EMBL" id="CP000521">
    <property type="protein sequence ID" value="ABO12581.2"/>
    <property type="molecule type" value="Genomic_DNA"/>
</dbReference>
<dbReference type="RefSeq" id="WP_000648005.1">
    <property type="nucleotide sequence ID" value="NZ_CP053098.1"/>
</dbReference>
<dbReference type="SMR" id="A3M6N7"/>
<dbReference type="GeneID" id="92894394"/>
<dbReference type="KEGG" id="acb:A1S_2154"/>
<dbReference type="HOGENOM" id="CLU_036856_0_1_6"/>
<dbReference type="GO" id="GO:0005737">
    <property type="term" value="C:cytoplasm"/>
    <property type="evidence" value="ECO:0007669"/>
    <property type="project" value="UniProtKB-SubCell"/>
</dbReference>
<dbReference type="GO" id="GO:0016149">
    <property type="term" value="F:translation release factor activity, codon specific"/>
    <property type="evidence" value="ECO:0007669"/>
    <property type="project" value="UniProtKB-UniRule"/>
</dbReference>
<dbReference type="FunFam" id="3.30.160.20:FF:000004">
    <property type="entry name" value="Peptide chain release factor 1"/>
    <property type="match status" value="1"/>
</dbReference>
<dbReference type="FunFam" id="3.30.70.1660:FF:000002">
    <property type="entry name" value="Peptide chain release factor 1"/>
    <property type="match status" value="1"/>
</dbReference>
<dbReference type="FunFam" id="3.30.70.1660:FF:000004">
    <property type="entry name" value="Peptide chain release factor 1"/>
    <property type="match status" value="1"/>
</dbReference>
<dbReference type="Gene3D" id="3.30.160.20">
    <property type="match status" value="1"/>
</dbReference>
<dbReference type="Gene3D" id="3.30.70.1660">
    <property type="match status" value="1"/>
</dbReference>
<dbReference type="Gene3D" id="6.10.140.1950">
    <property type="match status" value="1"/>
</dbReference>
<dbReference type="HAMAP" id="MF_00093">
    <property type="entry name" value="Rel_fac_1"/>
    <property type="match status" value="1"/>
</dbReference>
<dbReference type="InterPro" id="IPR005139">
    <property type="entry name" value="PCRF"/>
</dbReference>
<dbReference type="InterPro" id="IPR000352">
    <property type="entry name" value="Pep_chain_release_fac_I"/>
</dbReference>
<dbReference type="InterPro" id="IPR045853">
    <property type="entry name" value="Pep_chain_release_fac_I_sf"/>
</dbReference>
<dbReference type="InterPro" id="IPR050057">
    <property type="entry name" value="Prokaryotic/Mito_RF"/>
</dbReference>
<dbReference type="InterPro" id="IPR004373">
    <property type="entry name" value="RF-1"/>
</dbReference>
<dbReference type="NCBIfam" id="TIGR00019">
    <property type="entry name" value="prfA"/>
    <property type="match status" value="1"/>
</dbReference>
<dbReference type="NCBIfam" id="NF001859">
    <property type="entry name" value="PRK00591.1"/>
    <property type="match status" value="1"/>
</dbReference>
<dbReference type="PANTHER" id="PTHR43804">
    <property type="entry name" value="LD18447P"/>
    <property type="match status" value="1"/>
</dbReference>
<dbReference type="PANTHER" id="PTHR43804:SF7">
    <property type="entry name" value="LD18447P"/>
    <property type="match status" value="1"/>
</dbReference>
<dbReference type="Pfam" id="PF03462">
    <property type="entry name" value="PCRF"/>
    <property type="match status" value="1"/>
</dbReference>
<dbReference type="Pfam" id="PF00472">
    <property type="entry name" value="RF-1"/>
    <property type="match status" value="1"/>
</dbReference>
<dbReference type="SMART" id="SM00937">
    <property type="entry name" value="PCRF"/>
    <property type="match status" value="1"/>
</dbReference>
<dbReference type="SUPFAM" id="SSF75620">
    <property type="entry name" value="Release factor"/>
    <property type="match status" value="1"/>
</dbReference>
<dbReference type="PROSITE" id="PS00745">
    <property type="entry name" value="RF_PROK_I"/>
    <property type="match status" value="1"/>
</dbReference>
<accession>A3M6N7</accession>
<sequence length="362" mass="40585">MKASLRLRLDQLCDRHEELTALLADAEVISDNKRFRKLSREHSDLTEITEVWGKYRQAEEDIETAEMMKSDPDFKDMAEEEIQANKALLEELESQLNILMIPKDPNDSNAAYLEIRAGTGGDEAAIFSGDLFRMYSKYAESQGWRIEVLSENEGEHGGFKEVICRVDGDGVYGRLKFESGAHRVQRVPATESQGRVHTSACTVAILPEIDVDTNVEINPADLRIDTYRASGAGGQHINKTDSAVRITHIPTGTVVECQEERSQHKNKAKAMALLVSRLENAKRAAADAATSEMRRDLVGSGDRSERIRTYNYPQGRMTDHRINLTLYKLDAIMEGDLTELLDSLHREYQADQLAMLAQENGG</sequence>
<keyword id="KW-0963">Cytoplasm</keyword>
<keyword id="KW-0488">Methylation</keyword>
<keyword id="KW-0648">Protein biosynthesis</keyword>
<protein>
    <recommendedName>
        <fullName evidence="1">Peptide chain release factor 1</fullName>
        <shortName evidence="1">RF-1</shortName>
    </recommendedName>
</protein>
<proteinExistence type="inferred from homology"/>
<organism>
    <name type="scientific">Acinetobacter baumannii (strain ATCC 17978 / DSM 105126 / CIP 53.77 / LMG 1025 / NCDC KC755 / 5377)</name>
    <dbReference type="NCBI Taxonomy" id="400667"/>
    <lineage>
        <taxon>Bacteria</taxon>
        <taxon>Pseudomonadati</taxon>
        <taxon>Pseudomonadota</taxon>
        <taxon>Gammaproteobacteria</taxon>
        <taxon>Moraxellales</taxon>
        <taxon>Moraxellaceae</taxon>
        <taxon>Acinetobacter</taxon>
        <taxon>Acinetobacter calcoaceticus/baumannii complex</taxon>
    </lineage>
</organism>
<feature type="chain" id="PRO_1000093414" description="Peptide chain release factor 1">
    <location>
        <begin position="1"/>
        <end position="362"/>
    </location>
</feature>
<feature type="modified residue" description="N5-methylglutamine" evidence="1">
    <location>
        <position position="235"/>
    </location>
</feature>
<name>RF1_ACIBT</name>
<evidence type="ECO:0000255" key="1">
    <source>
        <dbReference type="HAMAP-Rule" id="MF_00093"/>
    </source>
</evidence>
<comment type="function">
    <text evidence="1">Peptide chain release factor 1 directs the termination of translation in response to the peptide chain termination codons UAG and UAA.</text>
</comment>
<comment type="subcellular location">
    <subcellularLocation>
        <location evidence="1">Cytoplasm</location>
    </subcellularLocation>
</comment>
<comment type="PTM">
    <text evidence="1">Methylated by PrmC. Methylation increases the termination efficiency of RF1.</text>
</comment>
<comment type="similarity">
    <text evidence="1">Belongs to the prokaryotic/mitochondrial release factor family.</text>
</comment>